<reference key="1">
    <citation type="journal article" date="2007" name="PLoS Genet.">
        <title>Meningococcal genetic variation mechanisms viewed through comparative analysis of serogroup C strain FAM18.</title>
        <authorList>
            <person name="Bentley S.D."/>
            <person name="Vernikos G.S."/>
            <person name="Snyder L.A.S."/>
            <person name="Churcher C."/>
            <person name="Arrowsmith C."/>
            <person name="Chillingworth T."/>
            <person name="Cronin A."/>
            <person name="Davis P.H."/>
            <person name="Holroyd N.E."/>
            <person name="Jagels K."/>
            <person name="Maddison M."/>
            <person name="Moule S."/>
            <person name="Rabbinowitsch E."/>
            <person name="Sharp S."/>
            <person name="Unwin L."/>
            <person name="Whitehead S."/>
            <person name="Quail M.A."/>
            <person name="Achtman M."/>
            <person name="Barrell B.G."/>
            <person name="Saunders N.J."/>
            <person name="Parkhill J."/>
        </authorList>
    </citation>
    <scope>NUCLEOTIDE SEQUENCE [LARGE SCALE GENOMIC DNA]</scope>
    <source>
        <strain>ATCC 700532 / DSM 15464 / FAM18</strain>
    </source>
</reference>
<evidence type="ECO:0000255" key="1">
    <source>
        <dbReference type="HAMAP-Rule" id="MF_00444"/>
    </source>
</evidence>
<feature type="chain" id="PRO_1000026107" description="ATP-dependent Clp protease proteolytic subunit">
    <location>
        <begin position="1"/>
        <end position="204"/>
    </location>
</feature>
<feature type="active site" description="Nucleophile" evidence="1">
    <location>
        <position position="102"/>
    </location>
</feature>
<feature type="active site" evidence="1">
    <location>
        <position position="127"/>
    </location>
</feature>
<accession>A1KUD9</accession>
<comment type="function">
    <text evidence="1">Cleaves peptides in various proteins in a process that requires ATP hydrolysis. Has a chymotrypsin-like activity. Plays a major role in the degradation of misfolded proteins.</text>
</comment>
<comment type="catalytic activity">
    <reaction evidence="1">
        <text>Hydrolysis of proteins to small peptides in the presence of ATP and magnesium. alpha-casein is the usual test substrate. In the absence of ATP, only oligopeptides shorter than five residues are hydrolyzed (such as succinyl-Leu-Tyr-|-NHMec, and Leu-Tyr-Leu-|-Tyr-Trp, in which cleavage of the -Tyr-|-Leu- and -Tyr-|-Trp bonds also occurs).</text>
        <dbReference type="EC" id="3.4.21.92"/>
    </reaction>
</comment>
<comment type="subunit">
    <text evidence="1">Fourteen ClpP subunits assemble into 2 heptameric rings which stack back to back to give a disk-like structure with a central cavity, resembling the structure of eukaryotic proteasomes.</text>
</comment>
<comment type="subcellular location">
    <subcellularLocation>
        <location evidence="1">Cytoplasm</location>
    </subcellularLocation>
</comment>
<comment type="similarity">
    <text evidence="1">Belongs to the peptidase S14 family.</text>
</comment>
<gene>
    <name evidence="1" type="primary">clpP</name>
    <name type="ordered locus">NMC1248</name>
</gene>
<keyword id="KW-0963">Cytoplasm</keyword>
<keyword id="KW-0378">Hydrolase</keyword>
<keyword id="KW-0645">Protease</keyword>
<keyword id="KW-0720">Serine protease</keyword>
<proteinExistence type="inferred from homology"/>
<dbReference type="EC" id="3.4.21.92" evidence="1"/>
<dbReference type="EMBL" id="AM421808">
    <property type="protein sequence ID" value="CAM10482.1"/>
    <property type="molecule type" value="Genomic_DNA"/>
</dbReference>
<dbReference type="RefSeq" id="WP_002217054.1">
    <property type="nucleotide sequence ID" value="NC_008767.1"/>
</dbReference>
<dbReference type="SMR" id="A1KUD9"/>
<dbReference type="MEROPS" id="S14.001"/>
<dbReference type="KEGG" id="nmc:NMC1248"/>
<dbReference type="HOGENOM" id="CLU_058707_3_2_4"/>
<dbReference type="Proteomes" id="UP000002286">
    <property type="component" value="Chromosome"/>
</dbReference>
<dbReference type="GO" id="GO:0005737">
    <property type="term" value="C:cytoplasm"/>
    <property type="evidence" value="ECO:0007669"/>
    <property type="project" value="UniProtKB-SubCell"/>
</dbReference>
<dbReference type="GO" id="GO:0009368">
    <property type="term" value="C:endopeptidase Clp complex"/>
    <property type="evidence" value="ECO:0007669"/>
    <property type="project" value="TreeGrafter"/>
</dbReference>
<dbReference type="GO" id="GO:0004176">
    <property type="term" value="F:ATP-dependent peptidase activity"/>
    <property type="evidence" value="ECO:0007669"/>
    <property type="project" value="InterPro"/>
</dbReference>
<dbReference type="GO" id="GO:0051117">
    <property type="term" value="F:ATPase binding"/>
    <property type="evidence" value="ECO:0007669"/>
    <property type="project" value="TreeGrafter"/>
</dbReference>
<dbReference type="GO" id="GO:0004252">
    <property type="term" value="F:serine-type endopeptidase activity"/>
    <property type="evidence" value="ECO:0007669"/>
    <property type="project" value="UniProtKB-UniRule"/>
</dbReference>
<dbReference type="GO" id="GO:0006515">
    <property type="term" value="P:protein quality control for misfolded or incompletely synthesized proteins"/>
    <property type="evidence" value="ECO:0007669"/>
    <property type="project" value="TreeGrafter"/>
</dbReference>
<dbReference type="CDD" id="cd07017">
    <property type="entry name" value="S14_ClpP_2"/>
    <property type="match status" value="1"/>
</dbReference>
<dbReference type="FunFam" id="3.90.226.10:FF:000001">
    <property type="entry name" value="ATP-dependent Clp protease proteolytic subunit"/>
    <property type="match status" value="1"/>
</dbReference>
<dbReference type="Gene3D" id="3.90.226.10">
    <property type="entry name" value="2-enoyl-CoA Hydratase, Chain A, domain 1"/>
    <property type="match status" value="1"/>
</dbReference>
<dbReference type="HAMAP" id="MF_00444">
    <property type="entry name" value="ClpP"/>
    <property type="match status" value="1"/>
</dbReference>
<dbReference type="InterPro" id="IPR001907">
    <property type="entry name" value="ClpP"/>
</dbReference>
<dbReference type="InterPro" id="IPR029045">
    <property type="entry name" value="ClpP/crotonase-like_dom_sf"/>
</dbReference>
<dbReference type="InterPro" id="IPR023562">
    <property type="entry name" value="ClpP/TepA"/>
</dbReference>
<dbReference type="InterPro" id="IPR033135">
    <property type="entry name" value="ClpP_His_AS"/>
</dbReference>
<dbReference type="InterPro" id="IPR018215">
    <property type="entry name" value="ClpP_Ser_AS"/>
</dbReference>
<dbReference type="NCBIfam" id="TIGR00493">
    <property type="entry name" value="clpP"/>
    <property type="match status" value="1"/>
</dbReference>
<dbReference type="NCBIfam" id="NF001368">
    <property type="entry name" value="PRK00277.1"/>
    <property type="match status" value="1"/>
</dbReference>
<dbReference type="NCBIfam" id="NF009205">
    <property type="entry name" value="PRK12553.1"/>
    <property type="match status" value="1"/>
</dbReference>
<dbReference type="PANTHER" id="PTHR10381">
    <property type="entry name" value="ATP-DEPENDENT CLP PROTEASE PROTEOLYTIC SUBUNIT"/>
    <property type="match status" value="1"/>
</dbReference>
<dbReference type="PANTHER" id="PTHR10381:SF70">
    <property type="entry name" value="ATP-DEPENDENT CLP PROTEASE PROTEOLYTIC SUBUNIT"/>
    <property type="match status" value="1"/>
</dbReference>
<dbReference type="Pfam" id="PF00574">
    <property type="entry name" value="CLP_protease"/>
    <property type="match status" value="1"/>
</dbReference>
<dbReference type="PRINTS" id="PR00127">
    <property type="entry name" value="CLPPROTEASEP"/>
</dbReference>
<dbReference type="SUPFAM" id="SSF52096">
    <property type="entry name" value="ClpP/crotonase"/>
    <property type="match status" value="1"/>
</dbReference>
<dbReference type="PROSITE" id="PS00382">
    <property type="entry name" value="CLP_PROTEASE_HIS"/>
    <property type="match status" value="1"/>
</dbReference>
<dbReference type="PROSITE" id="PS00381">
    <property type="entry name" value="CLP_PROTEASE_SER"/>
    <property type="match status" value="1"/>
</dbReference>
<sequence length="204" mass="22652">MSFDNYLVPTVIEQSGRGERAFDIYSRLLKERIVFLVGPVTDESANLVVAQLLFLESENPDKDIFFYINSPGGSVTAGMSIYDTMNFIKPDVSTLCLGQAASMGAFLLSAGEKGKRFALPNSRIMIHQPLISGGLGGQASDIEIHARELLKIKEKLNRLMAKHCGRDLADLERDTDRDNFMSAEEAKEYGLIDQILENRASLQF</sequence>
<organism>
    <name type="scientific">Neisseria meningitidis serogroup C / serotype 2a (strain ATCC 700532 / DSM 15464 / FAM18)</name>
    <dbReference type="NCBI Taxonomy" id="272831"/>
    <lineage>
        <taxon>Bacteria</taxon>
        <taxon>Pseudomonadati</taxon>
        <taxon>Pseudomonadota</taxon>
        <taxon>Betaproteobacteria</taxon>
        <taxon>Neisseriales</taxon>
        <taxon>Neisseriaceae</taxon>
        <taxon>Neisseria</taxon>
    </lineage>
</organism>
<name>CLPP_NEIMF</name>
<protein>
    <recommendedName>
        <fullName evidence="1">ATP-dependent Clp protease proteolytic subunit</fullName>
        <ecNumber evidence="1">3.4.21.92</ecNumber>
    </recommendedName>
    <alternativeName>
        <fullName evidence="1">Endopeptidase Clp</fullName>
    </alternativeName>
</protein>